<keyword id="KW-1015">Disulfide bond</keyword>
<keyword id="KW-0325">Glycoprotein</keyword>
<keyword id="KW-0372">Hormone</keyword>
<keyword id="KW-1185">Reference proteome</keyword>
<keyword id="KW-0964">Secreted</keyword>
<keyword id="KW-0732">Signal</keyword>
<accession>Q6YNX4</accession>
<proteinExistence type="evidence at transcript level"/>
<sequence>MDYYRKYAAVILATLSVFLHILHSFPDGEFIMQGCPECKLKENKYFSKLGAPIYQCMGCCFSRAYPTPARSKKTMLVPKNITSEATCCVAKAFTKATVMGNAKVENHTECHCSTCYYHKS</sequence>
<comment type="function">
    <text evidence="2">Shared alpha chain of the active heterodimeric glycoprotein hormones thyrotropin/thyroid stimulating hormone/TSH, lutropin/luteinizing hormone/LH and follitropin/follicle stimulating hormone/FSH. These hormones bind specific receptors on target cells that in turn activate downstream signaling pathways.</text>
</comment>
<comment type="subunit">
    <text evidence="2">Heterodimer. The active hormones thyrotropin, lutropin and follitropin are heterodimers composed of CGA, a common alpha chain described here and a unique beta chain which confers their biological specificity to the hormones: TSHB for thyrotropin, LHB for lutropin and FSHB for follitropin.</text>
</comment>
<comment type="subcellular location">
    <subcellularLocation>
        <location evidence="2">Secreted</location>
    </subcellularLocation>
</comment>
<comment type="similarity">
    <text evidence="3">Belongs to the glycoprotein hormones subunit alpha family.</text>
</comment>
<protein>
    <recommendedName>
        <fullName>Glycoprotein hormones alpha chain</fullName>
    </recommendedName>
    <alternativeName>
        <fullName>Anterior pituitary glycoprotein hormones common subunit alpha</fullName>
    </alternativeName>
    <alternativeName>
        <fullName>Follicle-stimulating hormone alpha chain</fullName>
        <shortName>FSH-alpha</shortName>
    </alternativeName>
    <alternativeName>
        <fullName>Follitropin alpha chain</fullName>
    </alternativeName>
    <alternativeName>
        <fullName>Luteinizing hormone alpha chain</fullName>
        <shortName>LSH-alpha</shortName>
    </alternativeName>
    <alternativeName>
        <fullName>Lutropin alpha chain</fullName>
    </alternativeName>
    <alternativeName>
        <fullName>Thyroid-stimulating hormone alpha chain</fullName>
        <shortName>TSH-alpha</shortName>
    </alternativeName>
    <alternativeName>
        <fullName>Thyrotropin alpha chain</fullName>
    </alternativeName>
</protein>
<organism>
    <name type="scientific">Monodelphis domestica</name>
    <name type="common">Gray short-tailed opossum</name>
    <dbReference type="NCBI Taxonomy" id="13616"/>
    <lineage>
        <taxon>Eukaryota</taxon>
        <taxon>Metazoa</taxon>
        <taxon>Chordata</taxon>
        <taxon>Craniata</taxon>
        <taxon>Vertebrata</taxon>
        <taxon>Euteleostomi</taxon>
        <taxon>Mammalia</taxon>
        <taxon>Metatheria</taxon>
        <taxon>Didelphimorphia</taxon>
        <taxon>Didelphidae</taxon>
        <taxon>Monodelphis</taxon>
    </lineage>
</organism>
<dbReference type="EMBL" id="AY048590">
    <property type="protein sequence ID" value="AAL05939.1"/>
    <property type="molecule type" value="mRNA"/>
</dbReference>
<dbReference type="RefSeq" id="NP_001028162.1">
    <property type="nucleotide sequence ID" value="NM_001032990.1"/>
</dbReference>
<dbReference type="RefSeq" id="XP_007483980.1">
    <property type="nucleotide sequence ID" value="XM_007483918.3"/>
</dbReference>
<dbReference type="SMR" id="Q6YNX4"/>
<dbReference type="FunCoup" id="Q6YNX4">
    <property type="interactions" value="88"/>
</dbReference>
<dbReference type="STRING" id="13616.ENSMODP00000056565"/>
<dbReference type="GlyCosmos" id="Q6YNX4">
    <property type="glycosylation" value="2 sites, No reported glycans"/>
</dbReference>
<dbReference type="Ensembl" id="ENSMODT00000023249.3">
    <property type="protein sequence ID" value="ENSMODP00000022844.1"/>
    <property type="gene ID" value="ENSMODG00000018321.3"/>
</dbReference>
<dbReference type="GeneID" id="554198"/>
<dbReference type="KEGG" id="mdo:554198"/>
<dbReference type="CTD" id="1081"/>
<dbReference type="eggNOG" id="ENOG502S1PK">
    <property type="taxonomic scope" value="Eukaryota"/>
</dbReference>
<dbReference type="GeneTree" id="ENSGT00390000012242"/>
<dbReference type="HOGENOM" id="CLU_148106_0_0_1"/>
<dbReference type="InParanoid" id="Q6YNX4"/>
<dbReference type="OrthoDB" id="9852859at2759"/>
<dbReference type="TreeFam" id="TF332733"/>
<dbReference type="Proteomes" id="UP000002280">
    <property type="component" value="Chromosome 2"/>
</dbReference>
<dbReference type="Bgee" id="ENSMODG00000018321">
    <property type="expression patterns" value="Expressed in ovary and 9 other cell types or tissues"/>
</dbReference>
<dbReference type="GO" id="GO:0005615">
    <property type="term" value="C:extracellular space"/>
    <property type="evidence" value="ECO:0000250"/>
    <property type="project" value="UniProtKB"/>
</dbReference>
<dbReference type="GO" id="GO:0016914">
    <property type="term" value="C:follicle-stimulating hormone complex"/>
    <property type="evidence" value="ECO:0000250"/>
    <property type="project" value="UniProtKB"/>
</dbReference>
<dbReference type="GO" id="GO:0016913">
    <property type="term" value="F:follicle-stimulating hormone activity"/>
    <property type="evidence" value="ECO:0000250"/>
    <property type="project" value="UniProtKB"/>
</dbReference>
<dbReference type="GO" id="GO:0007186">
    <property type="term" value="P:G protein-coupled receptor signaling pathway"/>
    <property type="evidence" value="ECO:0000250"/>
    <property type="project" value="UniProtKB"/>
</dbReference>
<dbReference type="GO" id="GO:0010893">
    <property type="term" value="P:positive regulation of steroid biosynthetic process"/>
    <property type="evidence" value="ECO:0000250"/>
    <property type="project" value="UniProtKB"/>
</dbReference>
<dbReference type="GO" id="GO:0010469">
    <property type="term" value="P:regulation of signaling receptor activity"/>
    <property type="evidence" value="ECO:0000250"/>
    <property type="project" value="UniProtKB"/>
</dbReference>
<dbReference type="GO" id="GO:0006590">
    <property type="term" value="P:thyroid hormone generation"/>
    <property type="evidence" value="ECO:0000318"/>
    <property type="project" value="GO_Central"/>
</dbReference>
<dbReference type="FunFam" id="2.10.90.10:FF:000011">
    <property type="entry name" value="Glycoprotein hormones alpha chain"/>
    <property type="match status" value="1"/>
</dbReference>
<dbReference type="Gene3D" id="2.10.90.10">
    <property type="entry name" value="Cystine-knot cytokines"/>
    <property type="match status" value="1"/>
</dbReference>
<dbReference type="InterPro" id="IPR029034">
    <property type="entry name" value="Cystine-knot_cytokine"/>
</dbReference>
<dbReference type="InterPro" id="IPR000476">
    <property type="entry name" value="Glyco_hormone"/>
</dbReference>
<dbReference type="PANTHER" id="PTHR11509">
    <property type="entry name" value="GLYCOPROTEIN HORMONE ALPHA CHAIN"/>
    <property type="match status" value="1"/>
</dbReference>
<dbReference type="PANTHER" id="PTHR11509:SF0">
    <property type="entry name" value="GLYCOPROTEIN HORMONES ALPHA CHAIN"/>
    <property type="match status" value="1"/>
</dbReference>
<dbReference type="Pfam" id="PF00236">
    <property type="entry name" value="Hormone_6"/>
    <property type="match status" value="1"/>
</dbReference>
<dbReference type="PRINTS" id="PR00274">
    <property type="entry name" value="GLYCOHORMONE"/>
</dbReference>
<dbReference type="SMART" id="SM00067">
    <property type="entry name" value="GHA"/>
    <property type="match status" value="1"/>
</dbReference>
<dbReference type="SUPFAM" id="SSF57501">
    <property type="entry name" value="Cystine-knot cytokines"/>
    <property type="match status" value="1"/>
</dbReference>
<dbReference type="PROSITE" id="PS00779">
    <property type="entry name" value="GLYCO_HORMONE_ALPHA_1"/>
    <property type="match status" value="1"/>
</dbReference>
<dbReference type="PROSITE" id="PS00780">
    <property type="entry name" value="GLYCO_HORMONE_ALPHA_2"/>
    <property type="match status" value="1"/>
</dbReference>
<dbReference type="PROSITE" id="PS50277">
    <property type="entry name" value="GLYCO_HORMONE_ALPHA_3"/>
    <property type="match status" value="1"/>
</dbReference>
<gene>
    <name type="primary">CGA</name>
</gene>
<name>GLHA_MONDO</name>
<evidence type="ECO:0000250" key="1"/>
<evidence type="ECO:0000250" key="2">
    <source>
        <dbReference type="UniProtKB" id="P01215"/>
    </source>
</evidence>
<evidence type="ECO:0000305" key="3"/>
<feature type="signal peptide" evidence="1">
    <location>
        <begin position="1"/>
        <end position="24"/>
    </location>
</feature>
<feature type="chain" id="PRO_0000042877" description="Glycoprotein hormones alpha chain">
    <location>
        <begin position="25"/>
        <end position="120"/>
    </location>
</feature>
<feature type="glycosylation site" description="N-linked (GlcNAc...) asparagine" evidence="2">
    <location>
        <position position="80"/>
    </location>
</feature>
<feature type="glycosylation site" description="N-linked (GlcNAc...) asparagine" evidence="2">
    <location>
        <position position="106"/>
    </location>
</feature>
<feature type="disulfide bond" evidence="2">
    <location>
        <begin position="35"/>
        <end position="59"/>
    </location>
</feature>
<feature type="disulfide bond" evidence="2">
    <location>
        <begin position="38"/>
        <end position="88"/>
    </location>
</feature>
<feature type="disulfide bond" evidence="2">
    <location>
        <begin position="56"/>
        <end position="110"/>
    </location>
</feature>
<feature type="disulfide bond" evidence="2">
    <location>
        <begin position="60"/>
        <end position="112"/>
    </location>
</feature>
<feature type="disulfide bond" evidence="2">
    <location>
        <begin position="87"/>
        <end position="115"/>
    </location>
</feature>
<reference key="1">
    <citation type="submission" date="2001-07" db="EMBL/GenBank/DDBJ databases">
        <title>Cloning and characterization of the cDNA encoding the anterior pituitary glycoprotein hormone common alpha subunit in the marsupial, Monodelphis domestica.</title>
        <authorList>
            <person name="Kacsoh B."/>
        </authorList>
    </citation>
    <scope>NUCLEOTIDE SEQUENCE [MRNA]</scope>
    <source>
        <tissue>Pituitary</tissue>
    </source>
</reference>